<name>HEMH_NOSP7</name>
<evidence type="ECO:0000255" key="1">
    <source>
        <dbReference type="HAMAP-Rule" id="MF_00323"/>
    </source>
</evidence>
<keyword id="KW-0963">Cytoplasm</keyword>
<keyword id="KW-0350">Heme biosynthesis</keyword>
<keyword id="KW-0408">Iron</keyword>
<keyword id="KW-0456">Lyase</keyword>
<keyword id="KW-0479">Metal-binding</keyword>
<keyword id="KW-0627">Porphyrin biosynthesis</keyword>
<keyword id="KW-1185">Reference proteome</keyword>
<sequence>MGRVGVLLLNLGGPDKLEDVGPFLYNLFSDPEIIRLPFRWLQKPLAWFIASRRTRTSQQNYKQIGGGSPLRRITEAQGEALKKQLGYLGQEANIYVGMRYWHPYTEEAIAQITQDNIEHLVILPLYPQFSISTSGSSFRLLDKLWQEEPKLQPIEYTVIPSWYKQPGYLQAMAELIAQELEQFPNPDEVHIFFSAHGVPKSYVEEAGDPYQQEIEECTALIMQTLNRPNAHTLAYQSRVGPVEWLQPYTEDALKELGAQGVKDLVVVPISFVSEHIETLQEIDIEYREVAEESGIHNFRRVPAPNTHPVFINALAELVIDALKNPSFKLSQAAQMKKMVKMYPQERWEWGLTTSAEVWNGRIAMLGFIALIIELITGHGFLHMIGLLQ</sequence>
<feature type="chain" id="PRO_1000116062" description="Ferrochelatase">
    <location>
        <begin position="1"/>
        <end position="388"/>
    </location>
</feature>
<feature type="binding site" evidence="1">
    <location>
        <position position="196"/>
    </location>
    <ligand>
        <name>Fe cation</name>
        <dbReference type="ChEBI" id="CHEBI:24875"/>
    </ligand>
</feature>
<feature type="binding site" evidence="1">
    <location>
        <position position="277"/>
    </location>
    <ligand>
        <name>Fe cation</name>
        <dbReference type="ChEBI" id="CHEBI:24875"/>
    </ligand>
</feature>
<protein>
    <recommendedName>
        <fullName evidence="1">Ferrochelatase</fullName>
        <ecNumber evidence="1">4.98.1.1</ecNumber>
    </recommendedName>
    <alternativeName>
        <fullName evidence="1">Heme synthase</fullName>
    </alternativeName>
    <alternativeName>
        <fullName evidence="1">Protoheme ferro-lyase</fullName>
    </alternativeName>
</protein>
<comment type="function">
    <text evidence="1">Catalyzes the ferrous insertion into protoporphyrin IX.</text>
</comment>
<comment type="catalytic activity">
    <reaction evidence="1">
        <text>heme b + 2 H(+) = protoporphyrin IX + Fe(2+)</text>
        <dbReference type="Rhea" id="RHEA:22584"/>
        <dbReference type="ChEBI" id="CHEBI:15378"/>
        <dbReference type="ChEBI" id="CHEBI:29033"/>
        <dbReference type="ChEBI" id="CHEBI:57306"/>
        <dbReference type="ChEBI" id="CHEBI:60344"/>
        <dbReference type="EC" id="4.98.1.1"/>
    </reaction>
</comment>
<comment type="pathway">
    <text evidence="1">Porphyrin-containing compound metabolism; protoheme biosynthesis; protoheme from protoporphyrin-IX: step 1/1.</text>
</comment>
<comment type="subcellular location">
    <subcellularLocation>
        <location evidence="1">Cytoplasm</location>
    </subcellularLocation>
</comment>
<comment type="similarity">
    <text evidence="1">Belongs to the ferrochelatase family.</text>
</comment>
<organism>
    <name type="scientific">Nostoc punctiforme (strain ATCC 29133 / PCC 73102)</name>
    <dbReference type="NCBI Taxonomy" id="63737"/>
    <lineage>
        <taxon>Bacteria</taxon>
        <taxon>Bacillati</taxon>
        <taxon>Cyanobacteriota</taxon>
        <taxon>Cyanophyceae</taxon>
        <taxon>Nostocales</taxon>
        <taxon>Nostocaceae</taxon>
        <taxon>Nostoc</taxon>
    </lineage>
</organism>
<proteinExistence type="inferred from homology"/>
<accession>B2J9P0</accession>
<reference key="1">
    <citation type="journal article" date="2013" name="Plant Physiol.">
        <title>A Nostoc punctiforme Sugar Transporter Necessary to Establish a Cyanobacterium-Plant Symbiosis.</title>
        <authorList>
            <person name="Ekman M."/>
            <person name="Picossi S."/>
            <person name="Campbell E.L."/>
            <person name="Meeks J.C."/>
            <person name="Flores E."/>
        </authorList>
    </citation>
    <scope>NUCLEOTIDE SEQUENCE [LARGE SCALE GENOMIC DNA]</scope>
    <source>
        <strain>ATCC 29133 / PCC 73102</strain>
    </source>
</reference>
<gene>
    <name evidence="1" type="primary">hemH</name>
    <name type="ordered locus">Npun_F2510</name>
</gene>
<dbReference type="EC" id="4.98.1.1" evidence="1"/>
<dbReference type="EMBL" id="CP001037">
    <property type="protein sequence ID" value="ACC81067.1"/>
    <property type="molecule type" value="Genomic_DNA"/>
</dbReference>
<dbReference type="RefSeq" id="WP_012409061.1">
    <property type="nucleotide sequence ID" value="NC_010628.1"/>
</dbReference>
<dbReference type="SMR" id="B2J9P0"/>
<dbReference type="STRING" id="63737.Npun_F2510"/>
<dbReference type="EnsemblBacteria" id="ACC81067">
    <property type="protein sequence ID" value="ACC81067"/>
    <property type="gene ID" value="Npun_F2510"/>
</dbReference>
<dbReference type="KEGG" id="npu:Npun_F2510"/>
<dbReference type="eggNOG" id="COG0276">
    <property type="taxonomic scope" value="Bacteria"/>
</dbReference>
<dbReference type="HOGENOM" id="CLU_018884_4_3_3"/>
<dbReference type="OrthoDB" id="9809741at2"/>
<dbReference type="PhylomeDB" id="B2J9P0"/>
<dbReference type="UniPathway" id="UPA00252">
    <property type="reaction ID" value="UER00325"/>
</dbReference>
<dbReference type="Proteomes" id="UP000001191">
    <property type="component" value="Chromosome"/>
</dbReference>
<dbReference type="GO" id="GO:0005737">
    <property type="term" value="C:cytoplasm"/>
    <property type="evidence" value="ECO:0007669"/>
    <property type="project" value="UniProtKB-SubCell"/>
</dbReference>
<dbReference type="GO" id="GO:0004325">
    <property type="term" value="F:ferrochelatase activity"/>
    <property type="evidence" value="ECO:0007669"/>
    <property type="project" value="UniProtKB-UniRule"/>
</dbReference>
<dbReference type="GO" id="GO:0046872">
    <property type="term" value="F:metal ion binding"/>
    <property type="evidence" value="ECO:0007669"/>
    <property type="project" value="UniProtKB-KW"/>
</dbReference>
<dbReference type="GO" id="GO:0006783">
    <property type="term" value="P:heme biosynthetic process"/>
    <property type="evidence" value="ECO:0007669"/>
    <property type="project" value="UniProtKB-UniRule"/>
</dbReference>
<dbReference type="CDD" id="cd00419">
    <property type="entry name" value="Ferrochelatase_C"/>
    <property type="match status" value="1"/>
</dbReference>
<dbReference type="CDD" id="cd03411">
    <property type="entry name" value="Ferrochelatase_N"/>
    <property type="match status" value="1"/>
</dbReference>
<dbReference type="FunFam" id="3.40.50.1400:FF:000006">
    <property type="entry name" value="Ferrochelatase"/>
    <property type="match status" value="1"/>
</dbReference>
<dbReference type="Gene3D" id="3.40.50.1400">
    <property type="match status" value="2"/>
</dbReference>
<dbReference type="HAMAP" id="MF_00323">
    <property type="entry name" value="Ferrochelatase"/>
    <property type="match status" value="1"/>
</dbReference>
<dbReference type="InterPro" id="IPR001015">
    <property type="entry name" value="Ferrochelatase"/>
</dbReference>
<dbReference type="InterPro" id="IPR019772">
    <property type="entry name" value="Ferrochelatase_AS"/>
</dbReference>
<dbReference type="InterPro" id="IPR033644">
    <property type="entry name" value="Ferrochelatase_C"/>
</dbReference>
<dbReference type="InterPro" id="IPR033659">
    <property type="entry name" value="Ferrochelatase_N"/>
</dbReference>
<dbReference type="NCBIfam" id="TIGR00109">
    <property type="entry name" value="hemH"/>
    <property type="match status" value="1"/>
</dbReference>
<dbReference type="PANTHER" id="PTHR11108">
    <property type="entry name" value="FERROCHELATASE"/>
    <property type="match status" value="1"/>
</dbReference>
<dbReference type="PANTHER" id="PTHR11108:SF1">
    <property type="entry name" value="FERROCHELATASE, MITOCHONDRIAL"/>
    <property type="match status" value="1"/>
</dbReference>
<dbReference type="Pfam" id="PF00762">
    <property type="entry name" value="Ferrochelatase"/>
    <property type="match status" value="1"/>
</dbReference>
<dbReference type="SUPFAM" id="SSF53800">
    <property type="entry name" value="Chelatase"/>
    <property type="match status" value="1"/>
</dbReference>
<dbReference type="SUPFAM" id="SSF103511">
    <property type="entry name" value="Chlorophyll a-b binding protein"/>
    <property type="match status" value="1"/>
</dbReference>
<dbReference type="PROSITE" id="PS00534">
    <property type="entry name" value="FERROCHELATASE"/>
    <property type="match status" value="1"/>
</dbReference>